<name>ORN_FRATF</name>
<comment type="function">
    <text evidence="1">3'-to-5' exoribonuclease specific for small oligoribonucleotides.</text>
</comment>
<comment type="subcellular location">
    <subcellularLocation>
        <location evidence="1">Cytoplasm</location>
    </subcellularLocation>
</comment>
<comment type="similarity">
    <text evidence="1">Belongs to the oligoribonuclease family.</text>
</comment>
<keyword id="KW-0963">Cytoplasm</keyword>
<keyword id="KW-0269">Exonuclease</keyword>
<keyword id="KW-0378">Hydrolase</keyword>
<keyword id="KW-0540">Nuclease</keyword>
<dbReference type="EC" id="3.1.15.-" evidence="1"/>
<dbReference type="EMBL" id="CP000803">
    <property type="protein sequence ID" value="ABU60674.1"/>
    <property type="molecule type" value="Genomic_DNA"/>
</dbReference>
<dbReference type="RefSeq" id="WP_003014199.1">
    <property type="nucleotide sequence ID" value="NC_009749.1"/>
</dbReference>
<dbReference type="SMR" id="A7N9M1"/>
<dbReference type="KEGG" id="fta:FTA_0197"/>
<dbReference type="HOGENOM" id="CLU_064761_2_0_6"/>
<dbReference type="GO" id="GO:0005737">
    <property type="term" value="C:cytoplasm"/>
    <property type="evidence" value="ECO:0007669"/>
    <property type="project" value="UniProtKB-SubCell"/>
</dbReference>
<dbReference type="GO" id="GO:0000175">
    <property type="term" value="F:3'-5'-RNA exonuclease activity"/>
    <property type="evidence" value="ECO:0007669"/>
    <property type="project" value="InterPro"/>
</dbReference>
<dbReference type="GO" id="GO:0003676">
    <property type="term" value="F:nucleic acid binding"/>
    <property type="evidence" value="ECO:0007669"/>
    <property type="project" value="InterPro"/>
</dbReference>
<dbReference type="GO" id="GO:0006259">
    <property type="term" value="P:DNA metabolic process"/>
    <property type="evidence" value="ECO:0007669"/>
    <property type="project" value="UniProtKB-ARBA"/>
</dbReference>
<dbReference type="CDD" id="cd06135">
    <property type="entry name" value="Orn"/>
    <property type="match status" value="1"/>
</dbReference>
<dbReference type="FunFam" id="3.30.420.10:FF:000003">
    <property type="entry name" value="Oligoribonuclease"/>
    <property type="match status" value="1"/>
</dbReference>
<dbReference type="Gene3D" id="3.30.420.10">
    <property type="entry name" value="Ribonuclease H-like superfamily/Ribonuclease H"/>
    <property type="match status" value="1"/>
</dbReference>
<dbReference type="HAMAP" id="MF_00045">
    <property type="entry name" value="Oligoribonuclease"/>
    <property type="match status" value="1"/>
</dbReference>
<dbReference type="InterPro" id="IPR013520">
    <property type="entry name" value="Exonuclease_RNaseT/DNA_pol3"/>
</dbReference>
<dbReference type="InterPro" id="IPR022894">
    <property type="entry name" value="Oligoribonuclease"/>
</dbReference>
<dbReference type="InterPro" id="IPR012337">
    <property type="entry name" value="RNaseH-like_sf"/>
</dbReference>
<dbReference type="InterPro" id="IPR036397">
    <property type="entry name" value="RNaseH_sf"/>
</dbReference>
<dbReference type="NCBIfam" id="NF003765">
    <property type="entry name" value="PRK05359.1"/>
    <property type="match status" value="1"/>
</dbReference>
<dbReference type="PANTHER" id="PTHR11046">
    <property type="entry name" value="OLIGORIBONUCLEASE, MITOCHONDRIAL"/>
    <property type="match status" value="1"/>
</dbReference>
<dbReference type="PANTHER" id="PTHR11046:SF0">
    <property type="entry name" value="OLIGORIBONUCLEASE, MITOCHONDRIAL"/>
    <property type="match status" value="1"/>
</dbReference>
<dbReference type="Pfam" id="PF00929">
    <property type="entry name" value="RNase_T"/>
    <property type="match status" value="1"/>
</dbReference>
<dbReference type="SMART" id="SM00479">
    <property type="entry name" value="EXOIII"/>
    <property type="match status" value="1"/>
</dbReference>
<dbReference type="SUPFAM" id="SSF53098">
    <property type="entry name" value="Ribonuclease H-like"/>
    <property type="match status" value="1"/>
</dbReference>
<sequence length="178" mass="20682">MQSADNLIWIDLEMTGLDVDSCKIIEIAAIITDKDLNIIAEAEPIAIYQPDEVLANMNEWCIKTHTETGLTQRVKDSKISTEAAEQQILEFIRKFVPYQSSPLCGNSIWQDRRFLAKYMPNIDEYCHYRMLDVTTLKLLNQYWGDGKSFEKKNTHKALDDIRESIAELKFYRQKLLSI</sequence>
<organism>
    <name type="scientific">Francisella tularensis subsp. holarctica (strain FTNF002-00 / FTA)</name>
    <dbReference type="NCBI Taxonomy" id="458234"/>
    <lineage>
        <taxon>Bacteria</taxon>
        <taxon>Pseudomonadati</taxon>
        <taxon>Pseudomonadota</taxon>
        <taxon>Gammaproteobacteria</taxon>
        <taxon>Thiotrichales</taxon>
        <taxon>Francisellaceae</taxon>
        <taxon>Francisella</taxon>
    </lineage>
</organism>
<feature type="chain" id="PRO_1000004248" description="Oligoribonuclease">
    <location>
        <begin position="1"/>
        <end position="178"/>
    </location>
</feature>
<feature type="domain" description="Exonuclease" evidence="1">
    <location>
        <begin position="7"/>
        <end position="168"/>
    </location>
</feature>
<feature type="active site" evidence="1">
    <location>
        <position position="128"/>
    </location>
</feature>
<evidence type="ECO:0000255" key="1">
    <source>
        <dbReference type="HAMAP-Rule" id="MF_00045"/>
    </source>
</evidence>
<accession>A7N9M1</accession>
<protein>
    <recommendedName>
        <fullName evidence="1">Oligoribonuclease</fullName>
        <ecNumber evidence="1">3.1.15.-</ecNumber>
    </recommendedName>
</protein>
<proteinExistence type="inferred from homology"/>
<reference key="1">
    <citation type="journal article" date="2009" name="PLoS ONE">
        <title>Complete genome sequence of Francisella tularensis subspecies holarctica FTNF002-00.</title>
        <authorList>
            <person name="Barabote R.D."/>
            <person name="Xie G."/>
            <person name="Brettin T.S."/>
            <person name="Hinrichs S.H."/>
            <person name="Fey P.D."/>
            <person name="Jay J.J."/>
            <person name="Engle J.L."/>
            <person name="Godbole S.D."/>
            <person name="Noronha J.M."/>
            <person name="Scheuermann R.H."/>
            <person name="Zhou L.W."/>
            <person name="Lion C."/>
            <person name="Dempsey M.P."/>
        </authorList>
    </citation>
    <scope>NUCLEOTIDE SEQUENCE [LARGE SCALE GENOMIC DNA]</scope>
    <source>
        <strain>FTNF002-00 / FTA</strain>
    </source>
</reference>
<gene>
    <name evidence="1" type="primary">orn</name>
    <name type="ordered locus">FTA_0197</name>
</gene>